<reference key="1">
    <citation type="journal article" date="2009" name="PLoS Genet.">
        <title>Organised genome dynamics in the Escherichia coli species results in highly diverse adaptive paths.</title>
        <authorList>
            <person name="Touchon M."/>
            <person name="Hoede C."/>
            <person name="Tenaillon O."/>
            <person name="Barbe V."/>
            <person name="Baeriswyl S."/>
            <person name="Bidet P."/>
            <person name="Bingen E."/>
            <person name="Bonacorsi S."/>
            <person name="Bouchier C."/>
            <person name="Bouvet O."/>
            <person name="Calteau A."/>
            <person name="Chiapello H."/>
            <person name="Clermont O."/>
            <person name="Cruveiller S."/>
            <person name="Danchin A."/>
            <person name="Diard M."/>
            <person name="Dossat C."/>
            <person name="Karoui M.E."/>
            <person name="Frapy E."/>
            <person name="Garry L."/>
            <person name="Ghigo J.M."/>
            <person name="Gilles A.M."/>
            <person name="Johnson J."/>
            <person name="Le Bouguenec C."/>
            <person name="Lescat M."/>
            <person name="Mangenot S."/>
            <person name="Martinez-Jehanne V."/>
            <person name="Matic I."/>
            <person name="Nassif X."/>
            <person name="Oztas S."/>
            <person name="Petit M.A."/>
            <person name="Pichon C."/>
            <person name="Rouy Z."/>
            <person name="Ruf C.S."/>
            <person name="Schneider D."/>
            <person name="Tourret J."/>
            <person name="Vacherie B."/>
            <person name="Vallenet D."/>
            <person name="Medigue C."/>
            <person name="Rocha E.P.C."/>
            <person name="Denamur E."/>
        </authorList>
    </citation>
    <scope>NUCLEOTIDE SEQUENCE [LARGE SCALE GENOMIC DNA]</scope>
    <source>
        <strain>ATCC 35469 / DSM 13698 / BCRC 15582 / CCUG 18766 / IAM 14443 / JCM 21226 / LMG 7866 / NBRC 102419 / NCTC 12128 / CDC 0568-73</strain>
    </source>
</reference>
<evidence type="ECO:0000255" key="1">
    <source>
        <dbReference type="HAMAP-Rule" id="MF_00010"/>
    </source>
</evidence>
<keyword id="KW-0997">Cell inner membrane</keyword>
<keyword id="KW-1003">Cell membrane</keyword>
<keyword id="KW-0472">Membrane</keyword>
<keyword id="KW-0812">Transmembrane</keyword>
<keyword id="KW-1133">Transmembrane helix</keyword>
<accession>B7LRA1</accession>
<organism>
    <name type="scientific">Escherichia fergusonii (strain ATCC 35469 / DSM 13698 / CCUG 18766 / IAM 14443 / JCM 21226 / LMG 7866 / NBRC 102419 / NCTC 12128 / CDC 0568-73)</name>
    <dbReference type="NCBI Taxonomy" id="585054"/>
    <lineage>
        <taxon>Bacteria</taxon>
        <taxon>Pseudomonadati</taxon>
        <taxon>Pseudomonadota</taxon>
        <taxon>Gammaproteobacteria</taxon>
        <taxon>Enterobacterales</taxon>
        <taxon>Enterobacteriaceae</taxon>
        <taxon>Escherichia</taxon>
    </lineage>
</organism>
<protein>
    <recommendedName>
        <fullName evidence="1">UPF0060 membrane protein YnfA</fullName>
    </recommendedName>
</protein>
<comment type="subcellular location">
    <subcellularLocation>
        <location evidence="1">Cell inner membrane</location>
        <topology evidence="1">Multi-pass membrane protein</topology>
    </subcellularLocation>
</comment>
<comment type="similarity">
    <text evidence="1">Belongs to the UPF0060 family.</text>
</comment>
<proteinExistence type="inferred from homology"/>
<dbReference type="EMBL" id="CU928158">
    <property type="protein sequence ID" value="CAQ89043.1"/>
    <property type="molecule type" value="Genomic_DNA"/>
</dbReference>
<dbReference type="RefSeq" id="WP_000477371.1">
    <property type="nucleotide sequence ID" value="NC_011740.1"/>
</dbReference>
<dbReference type="SMR" id="B7LRA1"/>
<dbReference type="KEGG" id="efe:EFER_1524"/>
<dbReference type="HOGENOM" id="CLU_117653_2_1_6"/>
<dbReference type="OrthoDB" id="123240at2"/>
<dbReference type="Proteomes" id="UP000000745">
    <property type="component" value="Chromosome"/>
</dbReference>
<dbReference type="GO" id="GO:0005886">
    <property type="term" value="C:plasma membrane"/>
    <property type="evidence" value="ECO:0007669"/>
    <property type="project" value="UniProtKB-SubCell"/>
</dbReference>
<dbReference type="HAMAP" id="MF_00010">
    <property type="entry name" value="UPF0060"/>
    <property type="match status" value="1"/>
</dbReference>
<dbReference type="InterPro" id="IPR003844">
    <property type="entry name" value="UPF0060"/>
</dbReference>
<dbReference type="NCBIfam" id="NF002586">
    <property type="entry name" value="PRK02237.1"/>
    <property type="match status" value="1"/>
</dbReference>
<dbReference type="PANTHER" id="PTHR36116">
    <property type="entry name" value="UPF0060 MEMBRANE PROTEIN YNFA"/>
    <property type="match status" value="1"/>
</dbReference>
<dbReference type="PANTHER" id="PTHR36116:SF1">
    <property type="entry name" value="UPF0060 MEMBRANE PROTEIN YNFA"/>
    <property type="match status" value="1"/>
</dbReference>
<dbReference type="Pfam" id="PF02694">
    <property type="entry name" value="UPF0060"/>
    <property type="match status" value="1"/>
</dbReference>
<dbReference type="SUPFAM" id="SSF103481">
    <property type="entry name" value="Multidrug resistance efflux transporter EmrE"/>
    <property type="match status" value="1"/>
</dbReference>
<feature type="chain" id="PRO_1000197494" description="UPF0060 membrane protein YnfA">
    <location>
        <begin position="1"/>
        <end position="108"/>
    </location>
</feature>
<feature type="topological domain" description="Periplasmic" evidence="1">
    <location>
        <begin position="1"/>
        <end position="5"/>
    </location>
</feature>
<feature type="transmembrane region" description="Helical" evidence="1">
    <location>
        <begin position="6"/>
        <end position="26"/>
    </location>
</feature>
<feature type="topological domain" description="Cytoplasmic" evidence="1">
    <location>
        <begin position="27"/>
        <end position="30"/>
    </location>
</feature>
<feature type="transmembrane region" description="Helical" evidence="1">
    <location>
        <begin position="31"/>
        <end position="51"/>
    </location>
</feature>
<feature type="topological domain" description="Periplasmic" evidence="1">
    <location>
        <begin position="52"/>
        <end position="60"/>
    </location>
</feature>
<feature type="transmembrane region" description="Helical" evidence="1">
    <location>
        <begin position="61"/>
        <end position="81"/>
    </location>
</feature>
<feature type="topological domain" description="Cytoplasmic" evidence="1">
    <location>
        <begin position="82"/>
        <end position="84"/>
    </location>
</feature>
<feature type="transmembrane region" description="Helical" evidence="1">
    <location>
        <begin position="85"/>
        <end position="105"/>
    </location>
</feature>
<feature type="topological domain" description="Periplasmic" evidence="1">
    <location>
        <begin position="106"/>
        <end position="108"/>
    </location>
</feature>
<name>YNFA_ESCF3</name>
<gene>
    <name evidence="1" type="primary">ynfA</name>
    <name type="ordered locus">EFER_1524</name>
</gene>
<sequence>MFKTTLLFFITALCEIIGCFLPWLWLKRNGSIWLLLPAGVSLAFFVWLLTLHPAASGRVYAAYGGVYVCTALLWLRFIDGVKLSLYDWSGALIALCGMLIIVAGWGRA</sequence>